<organism>
    <name type="scientific">Escherichia coli O8 (strain IAI1)</name>
    <dbReference type="NCBI Taxonomy" id="585034"/>
    <lineage>
        <taxon>Bacteria</taxon>
        <taxon>Pseudomonadati</taxon>
        <taxon>Pseudomonadota</taxon>
        <taxon>Gammaproteobacteria</taxon>
        <taxon>Enterobacterales</taxon>
        <taxon>Enterobacteriaceae</taxon>
        <taxon>Escherichia</taxon>
    </lineage>
</organism>
<name>RS4_ECO8A</name>
<feature type="chain" id="PRO_1000140727" description="Small ribosomal subunit protein uS4">
    <location>
        <begin position="1"/>
        <end position="206"/>
    </location>
</feature>
<feature type="domain" description="S4 RNA-binding" evidence="1">
    <location>
        <begin position="96"/>
        <end position="156"/>
    </location>
</feature>
<evidence type="ECO:0000255" key="1">
    <source>
        <dbReference type="HAMAP-Rule" id="MF_01306"/>
    </source>
</evidence>
<evidence type="ECO:0000305" key="2"/>
<comment type="function">
    <text evidence="1">One of the primary rRNA binding proteins, it binds directly to 16S rRNA where it nucleates assembly of the body of the 30S subunit.</text>
</comment>
<comment type="function">
    <text evidence="1">With S5 and S12 plays an important role in translational accuracy.</text>
</comment>
<comment type="subunit">
    <text evidence="1">Part of the 30S ribosomal subunit. Contacts protein S5. The interaction surface between S4 and S5 is involved in control of translational fidelity.</text>
</comment>
<comment type="similarity">
    <text evidence="1">Belongs to the universal ribosomal protein uS4 family.</text>
</comment>
<accession>B7M102</accession>
<keyword id="KW-0687">Ribonucleoprotein</keyword>
<keyword id="KW-0689">Ribosomal protein</keyword>
<keyword id="KW-0694">RNA-binding</keyword>
<keyword id="KW-0699">rRNA-binding</keyword>
<proteinExistence type="inferred from homology"/>
<gene>
    <name evidence="1" type="primary">rpsD</name>
    <name type="ordered locus">ECIAI1_3446</name>
</gene>
<protein>
    <recommendedName>
        <fullName evidence="1">Small ribosomal subunit protein uS4</fullName>
    </recommendedName>
    <alternativeName>
        <fullName evidence="2">30S ribosomal protein S4</fullName>
    </alternativeName>
</protein>
<sequence>MARYLGPKLKLSRREGTDLFLKSGVRAIDTKCKIEQAPGQHGARKPRLSDYGVQLREKQKVRRIYGVLERQFRNYYKEAARLKGNTGENLLALLEGRLDNVVYRMGFGATRAEARQLVSHKAIMVNGRVVNIASYQVSPNDVVSIREKAKKQSRVKAALELAEQREKPTWLEVDAGKMEGTFKRKPERSDLSADINEHLIVELYSK</sequence>
<dbReference type="EMBL" id="CU928160">
    <property type="protein sequence ID" value="CAR00248.1"/>
    <property type="molecule type" value="Genomic_DNA"/>
</dbReference>
<dbReference type="RefSeq" id="WP_000135224.1">
    <property type="nucleotide sequence ID" value="NC_011741.1"/>
</dbReference>
<dbReference type="SMR" id="B7M102"/>
<dbReference type="GeneID" id="93778691"/>
<dbReference type="KEGG" id="ecr:ECIAI1_3446"/>
<dbReference type="HOGENOM" id="CLU_092403_0_2_6"/>
<dbReference type="GO" id="GO:0015935">
    <property type="term" value="C:small ribosomal subunit"/>
    <property type="evidence" value="ECO:0007669"/>
    <property type="project" value="InterPro"/>
</dbReference>
<dbReference type="GO" id="GO:0019843">
    <property type="term" value="F:rRNA binding"/>
    <property type="evidence" value="ECO:0007669"/>
    <property type="project" value="UniProtKB-UniRule"/>
</dbReference>
<dbReference type="GO" id="GO:0003735">
    <property type="term" value="F:structural constituent of ribosome"/>
    <property type="evidence" value="ECO:0007669"/>
    <property type="project" value="InterPro"/>
</dbReference>
<dbReference type="GO" id="GO:0042274">
    <property type="term" value="P:ribosomal small subunit biogenesis"/>
    <property type="evidence" value="ECO:0007669"/>
    <property type="project" value="TreeGrafter"/>
</dbReference>
<dbReference type="GO" id="GO:0006412">
    <property type="term" value="P:translation"/>
    <property type="evidence" value="ECO:0007669"/>
    <property type="project" value="UniProtKB-UniRule"/>
</dbReference>
<dbReference type="CDD" id="cd00165">
    <property type="entry name" value="S4"/>
    <property type="match status" value="1"/>
</dbReference>
<dbReference type="FunFam" id="1.10.1050.10:FF:000001">
    <property type="entry name" value="30S ribosomal protein S4"/>
    <property type="match status" value="1"/>
</dbReference>
<dbReference type="FunFam" id="3.10.290.10:FF:000001">
    <property type="entry name" value="30S ribosomal protein S4"/>
    <property type="match status" value="1"/>
</dbReference>
<dbReference type="Gene3D" id="1.10.1050.10">
    <property type="entry name" value="Ribosomal Protein S4 Delta 41, Chain A, domain 1"/>
    <property type="match status" value="1"/>
</dbReference>
<dbReference type="Gene3D" id="3.10.290.10">
    <property type="entry name" value="RNA-binding S4 domain"/>
    <property type="match status" value="1"/>
</dbReference>
<dbReference type="HAMAP" id="MF_01306_B">
    <property type="entry name" value="Ribosomal_uS4_B"/>
    <property type="match status" value="1"/>
</dbReference>
<dbReference type="InterPro" id="IPR022801">
    <property type="entry name" value="Ribosomal_uS4"/>
</dbReference>
<dbReference type="InterPro" id="IPR005709">
    <property type="entry name" value="Ribosomal_uS4_bac-type"/>
</dbReference>
<dbReference type="InterPro" id="IPR018079">
    <property type="entry name" value="Ribosomal_uS4_CS"/>
</dbReference>
<dbReference type="InterPro" id="IPR001912">
    <property type="entry name" value="Ribosomal_uS4_N"/>
</dbReference>
<dbReference type="InterPro" id="IPR002942">
    <property type="entry name" value="S4_RNA-bd"/>
</dbReference>
<dbReference type="InterPro" id="IPR036986">
    <property type="entry name" value="S4_RNA-bd_sf"/>
</dbReference>
<dbReference type="NCBIfam" id="NF003717">
    <property type="entry name" value="PRK05327.1"/>
    <property type="match status" value="1"/>
</dbReference>
<dbReference type="NCBIfam" id="TIGR01017">
    <property type="entry name" value="rpsD_bact"/>
    <property type="match status" value="1"/>
</dbReference>
<dbReference type="PANTHER" id="PTHR11831">
    <property type="entry name" value="30S 40S RIBOSOMAL PROTEIN"/>
    <property type="match status" value="1"/>
</dbReference>
<dbReference type="PANTHER" id="PTHR11831:SF4">
    <property type="entry name" value="SMALL RIBOSOMAL SUBUNIT PROTEIN US4M"/>
    <property type="match status" value="1"/>
</dbReference>
<dbReference type="Pfam" id="PF00163">
    <property type="entry name" value="Ribosomal_S4"/>
    <property type="match status" value="1"/>
</dbReference>
<dbReference type="Pfam" id="PF01479">
    <property type="entry name" value="S4"/>
    <property type="match status" value="1"/>
</dbReference>
<dbReference type="SMART" id="SM01390">
    <property type="entry name" value="Ribosomal_S4"/>
    <property type="match status" value="1"/>
</dbReference>
<dbReference type="SMART" id="SM00363">
    <property type="entry name" value="S4"/>
    <property type="match status" value="1"/>
</dbReference>
<dbReference type="SUPFAM" id="SSF55174">
    <property type="entry name" value="Alpha-L RNA-binding motif"/>
    <property type="match status" value="1"/>
</dbReference>
<dbReference type="PROSITE" id="PS00632">
    <property type="entry name" value="RIBOSOMAL_S4"/>
    <property type="match status" value="1"/>
</dbReference>
<dbReference type="PROSITE" id="PS50889">
    <property type="entry name" value="S4"/>
    <property type="match status" value="1"/>
</dbReference>
<reference key="1">
    <citation type="journal article" date="2009" name="PLoS Genet.">
        <title>Organised genome dynamics in the Escherichia coli species results in highly diverse adaptive paths.</title>
        <authorList>
            <person name="Touchon M."/>
            <person name="Hoede C."/>
            <person name="Tenaillon O."/>
            <person name="Barbe V."/>
            <person name="Baeriswyl S."/>
            <person name="Bidet P."/>
            <person name="Bingen E."/>
            <person name="Bonacorsi S."/>
            <person name="Bouchier C."/>
            <person name="Bouvet O."/>
            <person name="Calteau A."/>
            <person name="Chiapello H."/>
            <person name="Clermont O."/>
            <person name="Cruveiller S."/>
            <person name="Danchin A."/>
            <person name="Diard M."/>
            <person name="Dossat C."/>
            <person name="Karoui M.E."/>
            <person name="Frapy E."/>
            <person name="Garry L."/>
            <person name="Ghigo J.M."/>
            <person name="Gilles A.M."/>
            <person name="Johnson J."/>
            <person name="Le Bouguenec C."/>
            <person name="Lescat M."/>
            <person name="Mangenot S."/>
            <person name="Martinez-Jehanne V."/>
            <person name="Matic I."/>
            <person name="Nassif X."/>
            <person name="Oztas S."/>
            <person name="Petit M.A."/>
            <person name="Pichon C."/>
            <person name="Rouy Z."/>
            <person name="Ruf C.S."/>
            <person name="Schneider D."/>
            <person name="Tourret J."/>
            <person name="Vacherie B."/>
            <person name="Vallenet D."/>
            <person name="Medigue C."/>
            <person name="Rocha E.P.C."/>
            <person name="Denamur E."/>
        </authorList>
    </citation>
    <scope>NUCLEOTIDE SEQUENCE [LARGE SCALE GENOMIC DNA]</scope>
    <source>
        <strain>IAI1</strain>
    </source>
</reference>